<accession>Q071N0</accession>
<comment type="function">
    <text evidence="1 2 4">Short-chain dehydrogenases/reductases involved in biosynthesis of morphinan-type benzylisoquinoline and opiate alkaloids natural products (PubMed:22098111). Catalyzes specifically the stereospecific conversion of salutaridine to salutaridinol (PubMed:22098111).</text>
</comment>
<comment type="catalytic activity">
    <reaction evidence="1 2 4">
        <text>(7S)-salutaridinol + NADP(+) = salutaridine + NADPH + H(+)</text>
        <dbReference type="Rhea" id="RHEA:10108"/>
        <dbReference type="ChEBI" id="CHEBI:15378"/>
        <dbReference type="ChEBI" id="CHEBI:57783"/>
        <dbReference type="ChEBI" id="CHEBI:58061"/>
        <dbReference type="ChEBI" id="CHEBI:58349"/>
        <dbReference type="ChEBI" id="CHEBI:58463"/>
        <dbReference type="EC" id="1.1.1.248"/>
    </reaction>
</comment>
<comment type="activity regulation">
    <text evidence="2 3">Strong substrate inhibition (PubMed:19648114). Was thought to be due to mutually exclusive productive and non-productive modes of substrate binding in the active site (PubMed:19648114). Alternatively, SALR may undergo significant conformational changes during catalytic turnover (PubMed:21169353).</text>
</comment>
<comment type="biophysicochemical properties">
    <kinetics>
        <KM evidence="1">80 uM for NADPH</KM>
        <KM evidence="1">198 uM for NADP</KM>
        <KM evidence="1">30.9 uM for salutaridine</KM>
        <KM evidence="1">23 uM for salutaridinol</KM>
        <Vmax evidence="1">9.4 pmol/sec/mg enzyme toward NADPH</Vmax>
        <Vmax evidence="1">11.6 pmol/sec/mg enzyme toward NADP</Vmax>
        <Vmax evidence="1">5.8 pmol/sec/mg enzyme with salutaridine as substrate</Vmax>
        <Vmax evidence="1">10.6 pmol/sec/mg enzyme with salutaridinol as substrate</Vmax>
    </kinetics>
    <phDependence>
        <text evidence="1">Optimum pH is between 5.5 and 6.0.</text>
    </phDependence>
    <temperatureDependence>
        <text evidence="1">Optimum temperature is between 30 and 35 degrees Celsius.</text>
    </temperatureDependence>
</comment>
<comment type="pathway">
    <text>Alkaloid biosynthesis; morphine biosynthesis.</text>
</comment>
<comment type="disruption phenotype">
    <text evidence="4">Accumulation of upstream metabolites, such as salutaridine, but reduced production of morphine.</text>
</comment>
<comment type="similarity">
    <text evidence="6">Belongs to the short-chain dehydrogenases/reductases (SDR) family.</text>
</comment>
<sequence>MPETCPNTVTKRRCAVVTGGNKGIGFEICKQLSSNGIMVVLTCRDVTKGHEAVEKLKNSNHENVVFHQLDVTDPIATMSSLADFIKTHFGKLDILVNNAGVAGFSVDADRFKAMISDIGEDSEELVKIYEKPEAQELMSETYELAEECLKINYNGVKSVTEVLIPLLQLSDSPRIVNVSSSTGSLKYVSNETALEILGDGDALTEERIDMVVNMLLKDFKENLIETNGWPSFGAAYTTSKACLNAYTRVLANKIPKFQVNCVCPGLVKTEMNYGIGNYTAEEGAEHVVRIALFPDDGPSGFFYDCSELSAF</sequence>
<dbReference type="EC" id="1.1.1.248" evidence="1 2"/>
<dbReference type="EMBL" id="DQ316261">
    <property type="protein sequence ID" value="ABC47654.1"/>
    <property type="molecule type" value="mRNA"/>
</dbReference>
<dbReference type="PDB" id="3O26">
    <property type="method" value="X-ray"/>
    <property type="resolution" value="1.91 A"/>
    <property type="chains" value="A=1-311"/>
</dbReference>
<dbReference type="PDBsum" id="3O26"/>
<dbReference type="SMR" id="Q071N0"/>
<dbReference type="KEGG" id="ag:ABC47654"/>
<dbReference type="BioCyc" id="MetaCyc:MONOMER-12300"/>
<dbReference type="BRENDA" id="1.1.1.248">
    <property type="organism ID" value="4515"/>
</dbReference>
<dbReference type="UniPathway" id="UPA00852"/>
<dbReference type="EvolutionaryTrace" id="Q071N0"/>
<dbReference type="GO" id="GO:0016020">
    <property type="term" value="C:membrane"/>
    <property type="evidence" value="ECO:0007669"/>
    <property type="project" value="TreeGrafter"/>
</dbReference>
<dbReference type="GO" id="GO:0050661">
    <property type="term" value="F:NADP binding"/>
    <property type="evidence" value="ECO:0000314"/>
    <property type="project" value="UniProtKB"/>
</dbReference>
<dbReference type="GO" id="GO:0047037">
    <property type="term" value="F:salutaridine reductase (NADPH) activity"/>
    <property type="evidence" value="ECO:0000314"/>
    <property type="project" value="UniProtKB"/>
</dbReference>
<dbReference type="GO" id="GO:0097295">
    <property type="term" value="P:morphine biosynthetic process"/>
    <property type="evidence" value="ECO:0000270"/>
    <property type="project" value="UniProtKB"/>
</dbReference>
<dbReference type="CDD" id="cd05324">
    <property type="entry name" value="carb_red_PTCR-like_SDR_c"/>
    <property type="match status" value="1"/>
</dbReference>
<dbReference type="Gene3D" id="3.40.50.720">
    <property type="entry name" value="NAD(P)-binding Rossmann-like Domain"/>
    <property type="match status" value="1"/>
</dbReference>
<dbReference type="InterPro" id="IPR045313">
    <property type="entry name" value="CBR1-like"/>
</dbReference>
<dbReference type="InterPro" id="IPR036291">
    <property type="entry name" value="NAD(P)-bd_dom_sf"/>
</dbReference>
<dbReference type="InterPro" id="IPR002347">
    <property type="entry name" value="SDR_fam"/>
</dbReference>
<dbReference type="PANTHER" id="PTHR43490">
    <property type="entry name" value="(+)-NEOMENTHOL DEHYDROGENASE"/>
    <property type="match status" value="1"/>
</dbReference>
<dbReference type="PANTHER" id="PTHR43490:SF131">
    <property type="entry name" value="SALUTARIDINE REDUCTASE-LIKE ISOFORM X2"/>
    <property type="match status" value="1"/>
</dbReference>
<dbReference type="Pfam" id="PF00106">
    <property type="entry name" value="adh_short"/>
    <property type="match status" value="1"/>
</dbReference>
<dbReference type="Pfam" id="PF13561">
    <property type="entry name" value="adh_short_C2"/>
    <property type="match status" value="1"/>
</dbReference>
<dbReference type="PRINTS" id="PR00081">
    <property type="entry name" value="GDHRDH"/>
</dbReference>
<dbReference type="PRINTS" id="PR00080">
    <property type="entry name" value="SDRFAMILY"/>
</dbReference>
<dbReference type="SUPFAM" id="SSF51735">
    <property type="entry name" value="NAD(P)-binding Rossmann-fold domains"/>
    <property type="match status" value="1"/>
</dbReference>
<proteinExistence type="evidence at protein level"/>
<organism evidence="7">
    <name type="scientific">Papaver somniferum</name>
    <name type="common">Opium poppy</name>
    <dbReference type="NCBI Taxonomy" id="3469"/>
    <lineage>
        <taxon>Eukaryota</taxon>
        <taxon>Viridiplantae</taxon>
        <taxon>Streptophyta</taxon>
        <taxon>Embryophyta</taxon>
        <taxon>Tracheophyta</taxon>
        <taxon>Spermatophyta</taxon>
        <taxon>Magnoliopsida</taxon>
        <taxon>Ranunculales</taxon>
        <taxon>Papaveraceae</taxon>
        <taxon>Papaveroideae</taxon>
        <taxon>Papaver</taxon>
    </lineage>
</organism>
<name>SALR_PAPSO</name>
<gene>
    <name evidence="5" type="primary">SALR</name>
</gene>
<feature type="chain" id="PRO_0000433978" description="Salutaridine reductase">
    <location>
        <begin position="1"/>
        <end position="311"/>
    </location>
</feature>
<feature type="active site" description="Proton acceptor" evidence="3">
    <location>
        <position position="236"/>
    </location>
</feature>
<feature type="binding site" evidence="3 8">
    <location>
        <begin position="21"/>
        <end position="24"/>
    </location>
    <ligand>
        <name>NADP(+)</name>
        <dbReference type="ChEBI" id="CHEBI:58349"/>
    </ligand>
</feature>
<feature type="binding site" evidence="3 8">
    <location>
        <position position="44"/>
    </location>
    <ligand>
        <name>NADP(+)</name>
        <dbReference type="ChEBI" id="CHEBI:58349"/>
    </ligand>
</feature>
<feature type="binding site" evidence="3 8">
    <location>
        <begin position="70"/>
        <end position="71"/>
    </location>
    <ligand>
        <name>NADP(+)</name>
        <dbReference type="ChEBI" id="CHEBI:58349"/>
    </ligand>
</feature>
<feature type="binding site" evidence="3 8">
    <location>
        <position position="98"/>
    </location>
    <ligand>
        <name>NADP(+)</name>
        <dbReference type="ChEBI" id="CHEBI:58349"/>
    </ligand>
</feature>
<feature type="binding site" evidence="3">
    <location>
        <position position="129"/>
    </location>
    <ligand>
        <name>substrate</name>
    </ligand>
</feature>
<feature type="binding site" evidence="3">
    <location>
        <position position="180"/>
    </location>
    <ligand>
        <name>substrate</name>
    </ligand>
</feature>
<feature type="binding site" evidence="3 8">
    <location>
        <position position="236"/>
    </location>
    <ligand>
        <name>NADP(+)</name>
        <dbReference type="ChEBI" id="CHEBI:58349"/>
    </ligand>
</feature>
<feature type="binding site" evidence="3 8">
    <location>
        <position position="240"/>
    </location>
    <ligand>
        <name>NADP(+)</name>
        <dbReference type="ChEBI" id="CHEBI:58349"/>
    </ligand>
</feature>
<feature type="binding site" evidence="3 8">
    <location>
        <begin position="267"/>
        <end position="272"/>
    </location>
    <ligand>
        <name>NADP(+)</name>
        <dbReference type="ChEBI" id="CHEBI:58349"/>
    </ligand>
</feature>
<feature type="disulfide bond" evidence="3 8">
    <location>
        <begin position="263"/>
        <end position="305"/>
    </location>
</feature>
<feature type="mutagenesis site" description="Weak substrate inhibition, decreased substrate affinity and increased reaction velocity. Loss of substrate inhibition and doubled maximal velocity; when associated with A-275." evidence="2">
    <original>F</original>
    <variation>A</variation>
    <location>
        <position position="104"/>
    </location>
</feature>
<feature type="mutagenesis site" description="Decreased substrate affinity." evidence="2">
    <original>V</original>
    <variation>A</variation>
    <location>
        <position position="106"/>
    </location>
</feature>
<feature type="mutagenesis site" description="Decreased substrate affinity." evidence="2">
    <original>D</original>
    <variation>A</variation>
    <location>
        <position position="107"/>
    </location>
</feature>
<feature type="mutagenesis site" description="No effect on activity." evidence="2">
    <original>S</original>
    <variation>A</variation>
    <location>
        <position position="181"/>
    </location>
</feature>
<feature type="mutagenesis site" description="Slightly decreased affinity, but strongly reduced activity." evidence="2">
    <original>T</original>
    <variation>A</variation>
    <location>
        <position position="182"/>
    </location>
</feature>
<feature type="mutagenesis site" description="Very low activity." evidence="2">
    <original>L</original>
    <variation>A</variation>
    <location>
        <position position="185"/>
    </location>
</feature>
<feature type="mutagenesis site" description="Increased substrate affinity, but low activity." evidence="2">
    <original>L</original>
    <variation>S</variation>
    <location>
        <position position="185"/>
    </location>
</feature>
<feature type="mutagenesis site" description="Reduced activity." evidence="2">
    <original>L</original>
    <variation>V</variation>
    <location>
        <position position="185"/>
    </location>
</feature>
<feature type="mutagenesis site" description="No effect on activity." evidence="2">
    <original>K</original>
    <variation>V</variation>
    <location>
        <position position="186"/>
    </location>
</feature>
<feature type="mutagenesis site" description="Decreased substrate affinity." evidence="2">
    <original>L</original>
    <variation>A</variation>
    <location>
        <position position="266"/>
    </location>
</feature>
<feature type="mutagenesis site" description="No effect on substrate affinity." evidence="2">
    <original>L</original>
    <variation>V</variation>
    <location>
        <position position="266"/>
    </location>
</feature>
<feature type="mutagenesis site" description="Abrogate substrate inhibition. Decreased substrate affinity and decreased reductase activity." evidence="2">
    <original>M</original>
    <variation>A</variation>
    <location>
        <position position="271"/>
    </location>
</feature>
<feature type="mutagenesis site" description="Abrogate substrate inhibition. Decreased substrate affinity and decreased reductase activity." evidence="2">
    <original>N</original>
    <variation>A</variation>
    <location>
        <position position="272"/>
    </location>
</feature>
<feature type="mutagenesis site" description="Weak substrate inhibition, decreased substrate affinity and increased reaction velocity. Loss of substrate inhibition and doubled maximal velocity; when associated with A-104." evidence="2">
    <original>I</original>
    <variation>A</variation>
    <location>
        <position position="275"/>
    </location>
</feature>
<feature type="mutagenesis site" description="No effect on substrate affinity." evidence="2">
    <original>I</original>
    <variation>V</variation>
    <location>
        <position position="275"/>
    </location>
</feature>
<feature type="strand" evidence="9">
    <location>
        <begin position="14"/>
        <end position="19"/>
    </location>
</feature>
<feature type="helix" evidence="9">
    <location>
        <begin position="23"/>
        <end position="34"/>
    </location>
</feature>
<feature type="strand" evidence="9">
    <location>
        <begin position="38"/>
        <end position="44"/>
    </location>
</feature>
<feature type="helix" evidence="9">
    <location>
        <begin position="46"/>
        <end position="57"/>
    </location>
</feature>
<feature type="turn" evidence="9">
    <location>
        <begin position="58"/>
        <end position="60"/>
    </location>
</feature>
<feature type="strand" evidence="9">
    <location>
        <begin position="63"/>
        <end position="68"/>
    </location>
</feature>
<feature type="helix" evidence="9">
    <location>
        <begin position="75"/>
        <end position="89"/>
    </location>
</feature>
<feature type="strand" evidence="9">
    <location>
        <begin position="94"/>
        <end position="97"/>
    </location>
</feature>
<feature type="helix" evidence="9">
    <location>
        <begin position="108"/>
        <end position="118"/>
    </location>
</feature>
<feature type="helix" evidence="9">
    <location>
        <begin position="124"/>
        <end position="128"/>
    </location>
</feature>
<feature type="helix" evidence="9">
    <location>
        <begin position="132"/>
        <end position="135"/>
    </location>
</feature>
<feature type="helix" evidence="9">
    <location>
        <begin position="142"/>
        <end position="152"/>
    </location>
</feature>
<feature type="helix" evidence="9">
    <location>
        <begin position="154"/>
        <end position="167"/>
    </location>
</feature>
<feature type="strand" evidence="9">
    <location>
        <begin position="170"/>
        <end position="172"/>
    </location>
</feature>
<feature type="strand" evidence="9">
    <location>
        <begin position="174"/>
        <end position="178"/>
    </location>
</feature>
<feature type="helix" evidence="9">
    <location>
        <begin position="181"/>
        <end position="183"/>
    </location>
</feature>
<feature type="helix" evidence="9">
    <location>
        <begin position="185"/>
        <end position="187"/>
    </location>
</feature>
<feature type="helix" evidence="9">
    <location>
        <begin position="191"/>
        <end position="198"/>
    </location>
</feature>
<feature type="helix" evidence="9">
    <location>
        <begin position="200"/>
        <end position="202"/>
    </location>
</feature>
<feature type="helix" evidence="9">
    <location>
        <begin position="205"/>
        <end position="220"/>
    </location>
</feature>
<feature type="turn" evidence="9">
    <location>
        <begin position="224"/>
        <end position="228"/>
    </location>
</feature>
<feature type="helix" evidence="9">
    <location>
        <begin position="234"/>
        <end position="253"/>
    </location>
</feature>
<feature type="strand" evidence="9">
    <location>
        <begin position="257"/>
        <end position="262"/>
    </location>
</feature>
<feature type="helix" evidence="9">
    <location>
        <begin position="270"/>
        <end position="272"/>
    </location>
</feature>
<feature type="helix" evidence="9">
    <location>
        <begin position="280"/>
        <end position="291"/>
    </location>
</feature>
<evidence type="ECO:0000269" key="1">
    <source>
    </source>
</evidence>
<evidence type="ECO:0000269" key="2">
    <source>
    </source>
</evidence>
<evidence type="ECO:0000269" key="3">
    <source>
    </source>
</evidence>
<evidence type="ECO:0000269" key="4">
    <source>
    </source>
</evidence>
<evidence type="ECO:0000303" key="5">
    <source>
    </source>
</evidence>
<evidence type="ECO:0000305" key="6"/>
<evidence type="ECO:0000312" key="7">
    <source>
        <dbReference type="EMBL" id="ABC47654.1"/>
    </source>
</evidence>
<evidence type="ECO:0007744" key="8">
    <source>
        <dbReference type="PDB" id="3O26"/>
    </source>
</evidence>
<evidence type="ECO:0007829" key="9">
    <source>
        <dbReference type="PDB" id="3O26"/>
    </source>
</evidence>
<protein>
    <recommendedName>
        <fullName evidence="5">Salutaridine reductase</fullName>
        <ecNumber evidence="1 2">1.1.1.248</ecNumber>
    </recommendedName>
</protein>
<reference key="1">
    <citation type="journal article" date="2006" name="Plant J.">
        <title>Comparative transcript and alkaloid profiling in Papaver species identifies a short chain dehydrogenase/reductase involved in morphine biosynthesis.</title>
        <authorList>
            <person name="Ziegler J."/>
            <person name="Voigtlander S."/>
            <person name="Schmidt J."/>
            <person name="Kramell R."/>
            <person name="Miersch O."/>
            <person name="Ammer C."/>
            <person name="Gesell A."/>
            <person name="Kutchan T.M."/>
        </authorList>
    </citation>
    <scope>NUCLEOTIDE SEQUENCE [MRNA]</scope>
    <scope>FUNCTION</scope>
    <scope>CATALYTIC ACTIVITY</scope>
    <scope>BIOPHYSICOCHEMICAL PROPERTIES</scope>
</reference>
<reference key="2">
    <citation type="journal article" date="2009" name="J. Biol. Chem.">
        <title>Removal of substrate inhibition and increase in maximal velocity in the short chain dehydrogenase/reductase salutaridine reductase involved in morphine biosynthesis.</title>
        <authorList>
            <person name="Ziegler J."/>
            <person name="Brandt W."/>
            <person name="Geissler R."/>
            <person name="Facchini P.J."/>
        </authorList>
    </citation>
    <scope>FUNCTION</scope>
    <scope>CATALYTIC ACTIVITY</scope>
    <scope>ACTIVITY REGULATION</scope>
    <scope>3D-STRUCTURE MODELING</scope>
    <scope>ACTIVE SITE</scope>
    <scope>MUTAGENESIS OF PHE-104; VAL-106; ASP-107; SER-181; THR-182; LEU-185; LYS-186; LEU-266; MET-271; ASN-272 AND ILE-275</scope>
</reference>
<reference key="3">
    <citation type="journal article" date="2012" name="Plant J.">
        <title>Systematic knockdown of morphine pathway enzymes in opium poppy using virus-induced gene silencing.</title>
        <authorList>
            <person name="Wijekoon C.P."/>
            <person name="Facchini P.J."/>
        </authorList>
    </citation>
    <scope>FUNCTION</scope>
    <scope>DISRUPTION PHENOTYPE</scope>
    <scope>CATALYTIC ACTIVITY</scope>
</reference>
<reference key="4">
    <citation type="journal article" date="2011" name="J. Biol. Chem.">
        <title>Atomic structure of salutaridine reductase from the opium poppy (Papaver somniferum).</title>
        <authorList>
            <person name="Higashi Y."/>
            <person name="Kutchan T.M."/>
            <person name="Smith T.J."/>
        </authorList>
    </citation>
    <scope>X-RAY CRYSTALLOGRAPHY (1.91 ANGSTROMS) IN COMPLEX WITH NADP</scope>
    <scope>DISULFIDE BONDS</scope>
    <scope>ACTIVITY REGULATION</scope>
</reference>
<keyword id="KW-0002">3D-structure</keyword>
<keyword id="KW-0017">Alkaloid metabolism</keyword>
<keyword id="KW-1015">Disulfide bond</keyword>
<keyword id="KW-0520">NAD</keyword>
<keyword id="KW-0521">NADP</keyword>
<keyword id="KW-0547">Nucleotide-binding</keyword>
<keyword id="KW-0560">Oxidoreductase</keyword>